<dbReference type="EMBL" id="BC082060">
    <property type="protein sequence ID" value="AAH82060.1"/>
    <property type="molecule type" value="mRNA"/>
</dbReference>
<dbReference type="RefSeq" id="NP_001020318.1">
    <property type="nucleotide sequence ID" value="NM_001025147.1"/>
</dbReference>
<dbReference type="RefSeq" id="XP_008759157.1">
    <property type="nucleotide sequence ID" value="XM_008760935.4"/>
</dbReference>
<dbReference type="RefSeq" id="XP_008759158.1">
    <property type="nucleotide sequence ID" value="XM_008760936.2"/>
</dbReference>
<dbReference type="RefSeq" id="XP_038958793.1">
    <property type="nucleotide sequence ID" value="XM_039102865.2"/>
</dbReference>
<dbReference type="RefSeq" id="XP_038958794.1">
    <property type="nucleotide sequence ID" value="XM_039102866.2"/>
</dbReference>
<dbReference type="RefSeq" id="XP_038958795.1">
    <property type="nucleotide sequence ID" value="XM_039102867.2"/>
</dbReference>
<dbReference type="RefSeq" id="XP_038958796.1">
    <property type="nucleotide sequence ID" value="XM_039102868.2"/>
</dbReference>
<dbReference type="RefSeq" id="XP_038958797.1">
    <property type="nucleotide sequence ID" value="XM_039102869.2"/>
</dbReference>
<dbReference type="RefSeq" id="XP_038958798.1">
    <property type="nucleotide sequence ID" value="XM_039102870.2"/>
</dbReference>
<dbReference type="RefSeq" id="XP_063138426.1">
    <property type="nucleotide sequence ID" value="XM_063282356.1"/>
</dbReference>
<dbReference type="RefSeq" id="XP_063138427.1">
    <property type="nucleotide sequence ID" value="XM_063282357.1"/>
</dbReference>
<dbReference type="SMR" id="Q66H29"/>
<dbReference type="FunCoup" id="Q66H29">
    <property type="interactions" value="82"/>
</dbReference>
<dbReference type="STRING" id="10116.ENSRNOP00000012560"/>
<dbReference type="GlyCosmos" id="Q66H29">
    <property type="glycosylation" value="1 site, No reported glycans"/>
</dbReference>
<dbReference type="GlyGen" id="Q66H29">
    <property type="glycosylation" value="1 site"/>
</dbReference>
<dbReference type="PhosphoSitePlus" id="Q66H29"/>
<dbReference type="PaxDb" id="10116-ENSRNOP00000012560"/>
<dbReference type="Ensembl" id="ENSRNOT00000012560.5">
    <property type="protein sequence ID" value="ENSRNOP00000012560.3"/>
    <property type="gene ID" value="ENSRNOG00000009487.5"/>
</dbReference>
<dbReference type="Ensembl" id="ENSRNOT00000097347.1">
    <property type="protein sequence ID" value="ENSRNOP00000094424.1"/>
    <property type="gene ID" value="ENSRNOG00000009487.5"/>
</dbReference>
<dbReference type="Ensembl" id="ENSRNOT00000098622.1">
    <property type="protein sequence ID" value="ENSRNOP00000083260.1"/>
    <property type="gene ID" value="ENSRNOG00000009487.5"/>
</dbReference>
<dbReference type="Ensembl" id="ENSRNOT00000105412.1">
    <property type="protein sequence ID" value="ENSRNOP00000085494.1"/>
    <property type="gene ID" value="ENSRNOG00000009487.5"/>
</dbReference>
<dbReference type="Ensembl" id="ENSRNOT00000118496.1">
    <property type="protein sequence ID" value="ENSRNOP00000077948.1"/>
    <property type="gene ID" value="ENSRNOG00000009487.5"/>
</dbReference>
<dbReference type="Ensembl" id="ENSRNOT00000119583.1">
    <property type="protein sequence ID" value="ENSRNOP00000094006.1"/>
    <property type="gene ID" value="ENSRNOG00000009487.5"/>
</dbReference>
<dbReference type="GeneID" id="499588"/>
<dbReference type="KEGG" id="rno:499588"/>
<dbReference type="AGR" id="RGD:1560200"/>
<dbReference type="CTD" id="26996"/>
<dbReference type="RGD" id="1560200">
    <property type="gene designation" value="Gpr160"/>
</dbReference>
<dbReference type="eggNOG" id="ENOG502RTG9">
    <property type="taxonomic scope" value="Eukaryota"/>
</dbReference>
<dbReference type="GeneTree" id="ENSGT00390000015520"/>
<dbReference type="HOGENOM" id="CLU_826300_0_0_1"/>
<dbReference type="InParanoid" id="Q66H29"/>
<dbReference type="OMA" id="SYQCPFY"/>
<dbReference type="OrthoDB" id="9947933at2759"/>
<dbReference type="PhylomeDB" id="Q66H29"/>
<dbReference type="TreeFam" id="TF335541"/>
<dbReference type="PRO" id="PR:Q66H29"/>
<dbReference type="Proteomes" id="UP000002494">
    <property type="component" value="Chromosome 2"/>
</dbReference>
<dbReference type="Bgee" id="ENSRNOG00000009487">
    <property type="expression patterns" value="Expressed in testis and 18 other cell types or tissues"/>
</dbReference>
<dbReference type="GO" id="GO:0005886">
    <property type="term" value="C:plasma membrane"/>
    <property type="evidence" value="ECO:0000318"/>
    <property type="project" value="GO_Central"/>
</dbReference>
<dbReference type="GO" id="GO:0043235">
    <property type="term" value="C:receptor complex"/>
    <property type="evidence" value="ECO:0000266"/>
    <property type="project" value="RGD"/>
</dbReference>
<dbReference type="GO" id="GO:0004930">
    <property type="term" value="F:G protein-coupled receptor activity"/>
    <property type="evidence" value="ECO:0007669"/>
    <property type="project" value="UniProtKB-KW"/>
</dbReference>
<dbReference type="Gene3D" id="1.20.1070.10">
    <property type="entry name" value="Rhodopsin 7-helix transmembrane proteins"/>
    <property type="match status" value="1"/>
</dbReference>
<dbReference type="InterPro" id="IPR017452">
    <property type="entry name" value="GPCR_Rhodpsn_7TM"/>
</dbReference>
<dbReference type="InterPro" id="IPR042353">
    <property type="entry name" value="GPR160"/>
</dbReference>
<dbReference type="PANTHER" id="PTHR15573">
    <property type="entry name" value="G-PROTEIN COUPLED RECEPTOR 160-RELATED"/>
    <property type="match status" value="1"/>
</dbReference>
<dbReference type="PANTHER" id="PTHR15573:SF0">
    <property type="entry name" value="G-PROTEIN COUPLED RECEPTOR 160-RELATED"/>
    <property type="match status" value="1"/>
</dbReference>
<dbReference type="PROSITE" id="PS50262">
    <property type="entry name" value="G_PROTEIN_RECEP_F1_2"/>
    <property type="match status" value="1"/>
</dbReference>
<name>GP160_RAT</name>
<evidence type="ECO:0000255" key="1"/>
<evidence type="ECO:0000255" key="2">
    <source>
        <dbReference type="PROSITE-ProRule" id="PRU00521"/>
    </source>
</evidence>
<accession>Q66H29</accession>
<feature type="chain" id="PRO_0000069645" description="Probable G-protein coupled receptor 160">
    <location>
        <begin position="1"/>
        <end position="336"/>
    </location>
</feature>
<feature type="topological domain" description="Extracellular" evidence="1">
    <location>
        <begin position="1"/>
        <end position="21"/>
    </location>
</feature>
<feature type="transmembrane region" description="Helical; Name=1" evidence="1">
    <location>
        <begin position="22"/>
        <end position="42"/>
    </location>
</feature>
<feature type="topological domain" description="Cytoplasmic" evidence="1">
    <location>
        <begin position="43"/>
        <end position="56"/>
    </location>
</feature>
<feature type="transmembrane region" description="Helical; Name=2" evidence="1">
    <location>
        <begin position="57"/>
        <end position="77"/>
    </location>
</feature>
<feature type="topological domain" description="Extracellular" evidence="1">
    <location>
        <begin position="78"/>
        <end position="95"/>
    </location>
</feature>
<feature type="transmembrane region" description="Helical; Name=3" evidence="1">
    <location>
        <begin position="96"/>
        <end position="116"/>
    </location>
</feature>
<feature type="topological domain" description="Cytoplasmic" evidence="1">
    <location>
        <begin position="117"/>
        <end position="136"/>
    </location>
</feature>
<feature type="transmembrane region" description="Helical; Name=4" evidence="1">
    <location>
        <begin position="137"/>
        <end position="157"/>
    </location>
</feature>
<feature type="topological domain" description="Extracellular" evidence="1">
    <location>
        <begin position="158"/>
        <end position="187"/>
    </location>
</feature>
<feature type="transmembrane region" description="Helical; Name=5" evidence="1">
    <location>
        <begin position="188"/>
        <end position="208"/>
    </location>
</feature>
<feature type="topological domain" description="Cytoplasmic" evidence="1">
    <location>
        <begin position="209"/>
        <end position="243"/>
    </location>
</feature>
<feature type="transmembrane region" description="Helical; Name=6" evidence="1">
    <location>
        <begin position="244"/>
        <end position="264"/>
    </location>
</feature>
<feature type="topological domain" description="Extracellular" evidence="1">
    <location>
        <begin position="265"/>
        <end position="272"/>
    </location>
</feature>
<feature type="transmembrane region" description="Helical; Name=7" evidence="1">
    <location>
        <begin position="273"/>
        <end position="293"/>
    </location>
</feature>
<feature type="topological domain" description="Cytoplasmic" evidence="1">
    <location>
        <begin position="294"/>
        <end position="336"/>
    </location>
</feature>
<feature type="glycosylation site" description="N-linked (GlcNAc...) asparagine" evidence="1">
    <location>
        <position position="8"/>
    </location>
</feature>
<organism>
    <name type="scientific">Rattus norvegicus</name>
    <name type="common">Rat</name>
    <dbReference type="NCBI Taxonomy" id="10116"/>
    <lineage>
        <taxon>Eukaryota</taxon>
        <taxon>Metazoa</taxon>
        <taxon>Chordata</taxon>
        <taxon>Craniata</taxon>
        <taxon>Vertebrata</taxon>
        <taxon>Euteleostomi</taxon>
        <taxon>Mammalia</taxon>
        <taxon>Eutheria</taxon>
        <taxon>Euarchontoglires</taxon>
        <taxon>Glires</taxon>
        <taxon>Rodentia</taxon>
        <taxon>Myomorpha</taxon>
        <taxon>Muroidea</taxon>
        <taxon>Muridae</taxon>
        <taxon>Murinae</taxon>
        <taxon>Rattus</taxon>
    </lineage>
</organism>
<proteinExistence type="evidence at transcript level"/>
<sequence length="336" mass="38783">MTALPSKNCSFQYQSHQAPRSLDATCLLLLIILGKVLLNVLILRVKRKDTSWSFMEYFCFSLALVDLLLLVNISVLTYFRDFVVLGIRFTNYHICLLTQIVSFAYGFLHYPVCSLACIDYWCNLSRATKPSSRWQKLLYLLTVILTWISVLAYVLGDPAISASLKTHKTSVNQCPSYVSTQSHWLSLSMLMILSVAFLISWQEVVALIQAIRIASYKNKAVLYFPFPPHTSYTVSPRAVLLPRLIVCFLGTWFPFVALQVLILSLRVQIPAYIEMNVPWLYFVNSFLIAAVYWFNCHKLYWRDGMFPVDPFINWKCCFVPVHRLKQVERPMSIIIC</sequence>
<gene>
    <name type="primary">Gpr160</name>
</gene>
<protein>
    <recommendedName>
        <fullName>Probable G-protein coupled receptor 160</fullName>
    </recommendedName>
</protein>
<reference key="1">
    <citation type="journal article" date="2004" name="Genome Res.">
        <title>The status, quality, and expansion of the NIH full-length cDNA project: the Mammalian Gene Collection (MGC).</title>
        <authorList>
            <consortium name="The MGC Project Team"/>
        </authorList>
    </citation>
    <scope>NUCLEOTIDE SEQUENCE [LARGE SCALE MRNA]</scope>
    <source>
        <tissue>Testis</tissue>
    </source>
</reference>
<comment type="function">
    <text>Orphan receptor.</text>
</comment>
<comment type="subcellular location">
    <subcellularLocation>
        <location>Cell membrane</location>
        <topology>Multi-pass membrane protein</topology>
    </subcellularLocation>
</comment>
<comment type="similarity">
    <text evidence="2">Belongs to the G-protein coupled receptor 1 family.</text>
</comment>
<keyword id="KW-1003">Cell membrane</keyword>
<keyword id="KW-0297">G-protein coupled receptor</keyword>
<keyword id="KW-0325">Glycoprotein</keyword>
<keyword id="KW-0472">Membrane</keyword>
<keyword id="KW-0675">Receptor</keyword>
<keyword id="KW-1185">Reference proteome</keyword>
<keyword id="KW-0807">Transducer</keyword>
<keyword id="KW-0812">Transmembrane</keyword>
<keyword id="KW-1133">Transmembrane helix</keyword>